<organism>
    <name type="scientific">Homo sapiens</name>
    <name type="common">Human</name>
    <dbReference type="NCBI Taxonomy" id="9606"/>
    <lineage>
        <taxon>Eukaryota</taxon>
        <taxon>Metazoa</taxon>
        <taxon>Chordata</taxon>
        <taxon>Craniata</taxon>
        <taxon>Vertebrata</taxon>
        <taxon>Euteleostomi</taxon>
        <taxon>Mammalia</taxon>
        <taxon>Eutheria</taxon>
        <taxon>Euarchontoglires</taxon>
        <taxon>Primates</taxon>
        <taxon>Haplorrhini</taxon>
        <taxon>Catarrhini</taxon>
        <taxon>Hominidae</taxon>
        <taxon>Homo</taxon>
    </lineage>
</organism>
<sequence length="395" mass="45271">MAAEATAVAGSGAVGGCLAKDGLQQSKCPDTTPKRRRASSLSRDAERRAYQWCREYLGGAWRRVQPEELRVYPVSGGLSNLLFRCSLPDHLPSVGEEPREVLLRLYGAILQGVDSLVLESVMFAILAERSLGPQLYGVFPEGRLEQYIPSRPLKTQELREPVLSAAIATKMAQFHGMEMPFTKEPHWLFGTMERYLKQIQDLPPTGLPEMNLLEMYSLKDEMGNLRKLLESTPSPVVFCHNDIQEGNILLLSEPENADSLMLVDFEYSSYNYRGFDIGNHFCEWVYDYTHEEWPFYKARPTDYPTQEQQLHFIRHYLAEAKKGETLSQEEQRKLEEDLLVEVSRYALASHFFWGLWSILQASMSTIEFGYLDYAQSRFQFYFQQKGQLTSVHSSS</sequence>
<comment type="function">
    <text evidence="2 4">Has a key role in phospholipid metabolism, and catalyzes the first step of phosphatidylethanolamine and phosphatidylcholine biosynthesis.</text>
</comment>
<comment type="catalytic activity">
    <reaction evidence="2 4">
        <text>choline + ATP = phosphocholine + ADP + H(+)</text>
        <dbReference type="Rhea" id="RHEA:12837"/>
        <dbReference type="ChEBI" id="CHEBI:15354"/>
        <dbReference type="ChEBI" id="CHEBI:15378"/>
        <dbReference type="ChEBI" id="CHEBI:30616"/>
        <dbReference type="ChEBI" id="CHEBI:295975"/>
        <dbReference type="ChEBI" id="CHEBI:456216"/>
        <dbReference type="EC" id="2.7.1.32"/>
    </reaction>
    <physiologicalReaction direction="left-to-right" evidence="4">
        <dbReference type="Rhea" id="RHEA:12838"/>
    </physiologicalReaction>
</comment>
<comment type="catalytic activity">
    <reaction evidence="2">
        <text>ethanolamine + ATP = phosphoethanolamine + ADP + H(+)</text>
        <dbReference type="Rhea" id="RHEA:13069"/>
        <dbReference type="ChEBI" id="CHEBI:15378"/>
        <dbReference type="ChEBI" id="CHEBI:30616"/>
        <dbReference type="ChEBI" id="CHEBI:57603"/>
        <dbReference type="ChEBI" id="CHEBI:58190"/>
        <dbReference type="ChEBI" id="CHEBI:456216"/>
        <dbReference type="EC" id="2.7.1.82"/>
    </reaction>
    <physiologicalReaction direction="left-to-right" evidence="13">
        <dbReference type="Rhea" id="RHEA:13070"/>
    </physiologicalReaction>
</comment>
<comment type="biophysicochemical properties">
    <kinetics>
        <KM evidence="2">0.57 mM for choline</KM>
        <KM evidence="2">2.9 mM for ethanolamine</KM>
    </kinetics>
</comment>
<comment type="pathway">
    <text evidence="13">Phospholipid metabolism; phosphatidylethanolamine biosynthesis; phosphatidylethanolamine from ethanolamine: step 1/3.</text>
</comment>
<comment type="subunit">
    <text evidence="10">Homodimer, and heterodimer with CHKA.</text>
</comment>
<comment type="alternative products">
    <event type="alternative splicing"/>
    <isoform>
        <id>Q9Y259-1</id>
        <name>1</name>
        <sequence type="displayed"/>
    </isoform>
    <isoform>
        <id>Q9Y259-2</id>
        <name>2</name>
        <sequence type="described" ref="VSP_034248 VSP_034249"/>
    </isoform>
</comment>
<comment type="disease" evidence="4 5 6 7 8 9">
    <disease id="DI-05503">
        <name>Muscular dystrophy, congenital, megaconial type</name>
        <acronym>MDCMC</acronym>
        <description>An autosomal recessive, congenital muscular dystrophy characterized by early-onset muscle wasting, intellectual disability, and dilated cardiomyopathy in half of affected individuals. Some patients may die from cardiomyopathy in the first or second decade of life. Muscle biopsy shows peculiar enlarged mitochondria that are prevalent toward the periphery of the fibers but are sparse in the center.</description>
        <dbReference type="MIM" id="602541"/>
    </disease>
    <text>The disease is caused by variants affecting the gene represented in this entry.</text>
</comment>
<comment type="miscellaneous">
    <text>This protein is produced by a bicistronic gene which also produces the CPT1B protein from a non-overlapping reading frame.</text>
</comment>
<comment type="similarity">
    <text evidence="12">Belongs to the choline/ethanolamine kinase family.</text>
</comment>
<comment type="sequence caution" evidence="12">
    <conflict type="erroneous gene model prediction">
        <sequence resource="EMBL-CDS" id="AAB03342"/>
    </conflict>
</comment>
<accession>Q9Y259</accession>
<accession>A0PJM6</accession>
<accession>Q13388</accession>
<reference key="1">
    <citation type="journal article" date="2000" name="J. Biol. Chem.">
        <title>Novel expression of equivocal messages containing both regions of choline/ethanolamine kinase and muscle type carnitine palmitoyltransferase I.</title>
        <authorList>
            <person name="Yamazaki N."/>
            <person name="Shinohara Y."/>
            <person name="Kajimoto K."/>
            <person name="Shindo M."/>
            <person name="Terada H."/>
        </authorList>
    </citation>
    <scope>NUCLEOTIDE SEQUENCE [GENOMIC DNA / MRNA] (ISOFORM 1)</scope>
</reference>
<reference key="2">
    <citation type="submission" date="1999-07" db="EMBL/GenBank/DDBJ databases">
        <authorList>
            <person name="Smink L.J."/>
            <person name="Huckle E.J."/>
        </authorList>
    </citation>
    <scope>NUCLEOTIDE SEQUENCE [MRNA] (ISOFORM 1)</scope>
</reference>
<reference key="3">
    <citation type="journal article" date="2004" name="Genome Biol.">
        <title>A genome annotation-driven approach to cloning the human ORFeome.</title>
        <authorList>
            <person name="Collins J.E."/>
            <person name="Wright C.L."/>
            <person name="Edwards C.A."/>
            <person name="Davis M.P."/>
            <person name="Grinham J.A."/>
            <person name="Cole C.G."/>
            <person name="Goward M.E."/>
            <person name="Aguado B."/>
            <person name="Mallya M."/>
            <person name="Mokrab Y."/>
            <person name="Huckle E.J."/>
            <person name="Beare D.M."/>
            <person name="Dunham I."/>
        </authorList>
    </citation>
    <scope>NUCLEOTIDE SEQUENCE [LARGE SCALE MRNA] (ISOFORM 1)</scope>
</reference>
<reference key="4">
    <citation type="journal article" date="2004" name="Nat. Genet.">
        <title>Complete sequencing and characterization of 21,243 full-length human cDNAs.</title>
        <authorList>
            <person name="Ota T."/>
            <person name="Suzuki Y."/>
            <person name="Nishikawa T."/>
            <person name="Otsuki T."/>
            <person name="Sugiyama T."/>
            <person name="Irie R."/>
            <person name="Wakamatsu A."/>
            <person name="Hayashi K."/>
            <person name="Sato H."/>
            <person name="Nagai K."/>
            <person name="Kimura K."/>
            <person name="Makita H."/>
            <person name="Sekine M."/>
            <person name="Obayashi M."/>
            <person name="Nishi T."/>
            <person name="Shibahara T."/>
            <person name="Tanaka T."/>
            <person name="Ishii S."/>
            <person name="Yamamoto J."/>
            <person name="Saito K."/>
            <person name="Kawai Y."/>
            <person name="Isono Y."/>
            <person name="Nakamura Y."/>
            <person name="Nagahari K."/>
            <person name="Murakami K."/>
            <person name="Yasuda T."/>
            <person name="Iwayanagi T."/>
            <person name="Wagatsuma M."/>
            <person name="Shiratori A."/>
            <person name="Sudo H."/>
            <person name="Hosoiri T."/>
            <person name="Kaku Y."/>
            <person name="Kodaira H."/>
            <person name="Kondo H."/>
            <person name="Sugawara M."/>
            <person name="Takahashi M."/>
            <person name="Kanda K."/>
            <person name="Yokoi T."/>
            <person name="Furuya T."/>
            <person name="Kikkawa E."/>
            <person name="Omura Y."/>
            <person name="Abe K."/>
            <person name="Kamihara K."/>
            <person name="Katsuta N."/>
            <person name="Sato K."/>
            <person name="Tanikawa M."/>
            <person name="Yamazaki M."/>
            <person name="Ninomiya K."/>
            <person name="Ishibashi T."/>
            <person name="Yamashita H."/>
            <person name="Murakawa K."/>
            <person name="Fujimori K."/>
            <person name="Tanai H."/>
            <person name="Kimata M."/>
            <person name="Watanabe M."/>
            <person name="Hiraoka S."/>
            <person name="Chiba Y."/>
            <person name="Ishida S."/>
            <person name="Ono Y."/>
            <person name="Takiguchi S."/>
            <person name="Watanabe S."/>
            <person name="Yosida M."/>
            <person name="Hotuta T."/>
            <person name="Kusano J."/>
            <person name="Kanehori K."/>
            <person name="Takahashi-Fujii A."/>
            <person name="Hara H."/>
            <person name="Tanase T.-O."/>
            <person name="Nomura Y."/>
            <person name="Togiya S."/>
            <person name="Komai F."/>
            <person name="Hara R."/>
            <person name="Takeuchi K."/>
            <person name="Arita M."/>
            <person name="Imose N."/>
            <person name="Musashino K."/>
            <person name="Yuuki H."/>
            <person name="Oshima A."/>
            <person name="Sasaki N."/>
            <person name="Aotsuka S."/>
            <person name="Yoshikawa Y."/>
            <person name="Matsunawa H."/>
            <person name="Ichihara T."/>
            <person name="Shiohata N."/>
            <person name="Sano S."/>
            <person name="Moriya S."/>
            <person name="Momiyama H."/>
            <person name="Satoh N."/>
            <person name="Takami S."/>
            <person name="Terashima Y."/>
            <person name="Suzuki O."/>
            <person name="Nakagawa S."/>
            <person name="Senoh A."/>
            <person name="Mizoguchi H."/>
            <person name="Goto Y."/>
            <person name="Shimizu F."/>
            <person name="Wakebe H."/>
            <person name="Hishigaki H."/>
            <person name="Watanabe T."/>
            <person name="Sugiyama A."/>
            <person name="Takemoto M."/>
            <person name="Kawakami B."/>
            <person name="Yamazaki M."/>
            <person name="Watanabe K."/>
            <person name="Kumagai A."/>
            <person name="Itakura S."/>
            <person name="Fukuzumi Y."/>
            <person name="Fujimori Y."/>
            <person name="Komiyama M."/>
            <person name="Tashiro H."/>
            <person name="Tanigami A."/>
            <person name="Fujiwara T."/>
            <person name="Ono T."/>
            <person name="Yamada K."/>
            <person name="Fujii Y."/>
            <person name="Ozaki K."/>
            <person name="Hirao M."/>
            <person name="Ohmori Y."/>
            <person name="Kawabata A."/>
            <person name="Hikiji T."/>
            <person name="Kobatake N."/>
            <person name="Inagaki H."/>
            <person name="Ikema Y."/>
            <person name="Okamoto S."/>
            <person name="Okitani R."/>
            <person name="Kawakami T."/>
            <person name="Noguchi S."/>
            <person name="Itoh T."/>
            <person name="Shigeta K."/>
            <person name="Senba T."/>
            <person name="Matsumura K."/>
            <person name="Nakajima Y."/>
            <person name="Mizuno T."/>
            <person name="Morinaga M."/>
            <person name="Sasaki M."/>
            <person name="Togashi T."/>
            <person name="Oyama M."/>
            <person name="Hata H."/>
            <person name="Watanabe M."/>
            <person name="Komatsu T."/>
            <person name="Mizushima-Sugano J."/>
            <person name="Satoh T."/>
            <person name="Shirai Y."/>
            <person name="Takahashi Y."/>
            <person name="Nakagawa K."/>
            <person name="Okumura K."/>
            <person name="Nagase T."/>
            <person name="Nomura N."/>
            <person name="Kikuchi H."/>
            <person name="Masuho Y."/>
            <person name="Yamashita R."/>
            <person name="Nakai K."/>
            <person name="Yada T."/>
            <person name="Nakamura Y."/>
            <person name="Ohara O."/>
            <person name="Isogai T."/>
            <person name="Sugano S."/>
        </authorList>
    </citation>
    <scope>NUCLEOTIDE SEQUENCE [LARGE SCALE MRNA]</scope>
    <source>
        <tissue>Brain</tissue>
    </source>
</reference>
<reference key="5">
    <citation type="journal article" date="1999" name="Nature">
        <title>The DNA sequence of human chromosome 22.</title>
        <authorList>
            <person name="Dunham I."/>
            <person name="Hunt A.R."/>
            <person name="Collins J.E."/>
            <person name="Bruskiewich R."/>
            <person name="Beare D.M."/>
            <person name="Clamp M."/>
            <person name="Smink L.J."/>
            <person name="Ainscough R."/>
            <person name="Almeida J.P."/>
            <person name="Babbage A.K."/>
            <person name="Bagguley C."/>
            <person name="Bailey J."/>
            <person name="Barlow K.F."/>
            <person name="Bates K.N."/>
            <person name="Beasley O.P."/>
            <person name="Bird C.P."/>
            <person name="Blakey S.E."/>
            <person name="Bridgeman A.M."/>
            <person name="Buck D."/>
            <person name="Burgess J."/>
            <person name="Burrill W.D."/>
            <person name="Burton J."/>
            <person name="Carder C."/>
            <person name="Carter N.P."/>
            <person name="Chen Y."/>
            <person name="Clark G."/>
            <person name="Clegg S.M."/>
            <person name="Cobley V.E."/>
            <person name="Cole C.G."/>
            <person name="Collier R.E."/>
            <person name="Connor R."/>
            <person name="Conroy D."/>
            <person name="Corby N.R."/>
            <person name="Coville G.J."/>
            <person name="Cox A.V."/>
            <person name="Davis J."/>
            <person name="Dawson E."/>
            <person name="Dhami P.D."/>
            <person name="Dockree C."/>
            <person name="Dodsworth S.J."/>
            <person name="Durbin R.M."/>
            <person name="Ellington A.G."/>
            <person name="Evans K.L."/>
            <person name="Fey J.M."/>
            <person name="Fleming K."/>
            <person name="French L."/>
            <person name="Garner A.A."/>
            <person name="Gilbert J.G.R."/>
            <person name="Goward M.E."/>
            <person name="Grafham D.V."/>
            <person name="Griffiths M.N.D."/>
            <person name="Hall C."/>
            <person name="Hall R.E."/>
            <person name="Hall-Tamlyn G."/>
            <person name="Heathcott R.W."/>
            <person name="Ho S."/>
            <person name="Holmes S."/>
            <person name="Hunt S.E."/>
            <person name="Jones M.C."/>
            <person name="Kershaw J."/>
            <person name="Kimberley A.M."/>
            <person name="King A."/>
            <person name="Laird G.K."/>
            <person name="Langford C.F."/>
            <person name="Leversha M.A."/>
            <person name="Lloyd C."/>
            <person name="Lloyd D.M."/>
            <person name="Martyn I.D."/>
            <person name="Mashreghi-Mohammadi M."/>
            <person name="Matthews L.H."/>
            <person name="Mccann O.T."/>
            <person name="Mcclay J."/>
            <person name="Mclaren S."/>
            <person name="McMurray A.A."/>
            <person name="Milne S.A."/>
            <person name="Mortimore B.J."/>
            <person name="Odell C.N."/>
            <person name="Pavitt R."/>
            <person name="Pearce A.V."/>
            <person name="Pearson D."/>
            <person name="Phillimore B.J.C.T."/>
            <person name="Phillips S.H."/>
            <person name="Plumb R.W."/>
            <person name="Ramsay H."/>
            <person name="Ramsey Y."/>
            <person name="Rogers L."/>
            <person name="Ross M.T."/>
            <person name="Scott C.E."/>
            <person name="Sehra H.K."/>
            <person name="Skuce C.D."/>
            <person name="Smalley S."/>
            <person name="Smith M.L."/>
            <person name="Soderlund C."/>
            <person name="Spragon L."/>
            <person name="Steward C.A."/>
            <person name="Sulston J.E."/>
            <person name="Swann R.M."/>
            <person name="Vaudin M."/>
            <person name="Wall M."/>
            <person name="Wallis J.M."/>
            <person name="Whiteley M.N."/>
            <person name="Willey D.L."/>
            <person name="Williams L."/>
            <person name="Williams S.A."/>
            <person name="Williamson H."/>
            <person name="Wilmer T.E."/>
            <person name="Wilming L."/>
            <person name="Wright C.L."/>
            <person name="Hubbard T."/>
            <person name="Bentley D.R."/>
            <person name="Beck S."/>
            <person name="Rogers J."/>
            <person name="Shimizu N."/>
            <person name="Minoshima S."/>
            <person name="Kawasaki K."/>
            <person name="Sasaki T."/>
            <person name="Asakawa S."/>
            <person name="Kudoh J."/>
            <person name="Shintani A."/>
            <person name="Shibuya K."/>
            <person name="Yoshizaki Y."/>
            <person name="Aoki N."/>
            <person name="Mitsuyama S."/>
            <person name="Roe B.A."/>
            <person name="Chen F."/>
            <person name="Chu L."/>
            <person name="Crabtree J."/>
            <person name="Deschamps S."/>
            <person name="Do A."/>
            <person name="Do T."/>
            <person name="Dorman A."/>
            <person name="Fang F."/>
            <person name="Fu Y."/>
            <person name="Hu P."/>
            <person name="Hua A."/>
            <person name="Kenton S."/>
            <person name="Lai H."/>
            <person name="Lao H.I."/>
            <person name="Lewis J."/>
            <person name="Lewis S."/>
            <person name="Lin S.-P."/>
            <person name="Loh P."/>
            <person name="Malaj E."/>
            <person name="Nguyen T."/>
            <person name="Pan H."/>
            <person name="Phan S."/>
            <person name="Qi S."/>
            <person name="Qian Y."/>
            <person name="Ray L."/>
            <person name="Ren Q."/>
            <person name="Shaull S."/>
            <person name="Sloan D."/>
            <person name="Song L."/>
            <person name="Wang Q."/>
            <person name="Wang Y."/>
            <person name="Wang Z."/>
            <person name="White J."/>
            <person name="Willingham D."/>
            <person name="Wu H."/>
            <person name="Yao Z."/>
            <person name="Zhan M."/>
            <person name="Zhang G."/>
            <person name="Chissoe S."/>
            <person name="Murray J."/>
            <person name="Miller N."/>
            <person name="Minx P."/>
            <person name="Fulton R."/>
            <person name="Johnson D."/>
            <person name="Bemis G."/>
            <person name="Bentley D."/>
            <person name="Bradshaw H."/>
            <person name="Bourne S."/>
            <person name="Cordes M."/>
            <person name="Du Z."/>
            <person name="Fulton L."/>
            <person name="Goela D."/>
            <person name="Graves T."/>
            <person name="Hawkins J."/>
            <person name="Hinds K."/>
            <person name="Kemp K."/>
            <person name="Latreille P."/>
            <person name="Layman D."/>
            <person name="Ozersky P."/>
            <person name="Rohlfing T."/>
            <person name="Scheet P."/>
            <person name="Walker C."/>
            <person name="Wamsley A."/>
            <person name="Wohldmann P."/>
            <person name="Pepin K."/>
            <person name="Nelson J."/>
            <person name="Korf I."/>
            <person name="Bedell J.A."/>
            <person name="Hillier L.W."/>
            <person name="Mardis E."/>
            <person name="Waterston R."/>
            <person name="Wilson R."/>
            <person name="Emanuel B.S."/>
            <person name="Shaikh T."/>
            <person name="Kurahashi H."/>
            <person name="Saitta S."/>
            <person name="Budarf M.L."/>
            <person name="McDermid H.E."/>
            <person name="Johnson A."/>
            <person name="Wong A.C.C."/>
            <person name="Morrow B.E."/>
            <person name="Edelmann L."/>
            <person name="Kim U.J."/>
            <person name="Shizuya H."/>
            <person name="Simon M.I."/>
            <person name="Dumanski J.P."/>
            <person name="Peyrard M."/>
            <person name="Kedra D."/>
            <person name="Seroussi E."/>
            <person name="Fransson I."/>
            <person name="Tapia I."/>
            <person name="Bruder C.E."/>
            <person name="O'Brien K.P."/>
            <person name="Wilkinson P."/>
            <person name="Bodenteich A."/>
            <person name="Hartman K."/>
            <person name="Hu X."/>
            <person name="Khan A.S."/>
            <person name="Lane L."/>
            <person name="Tilahun Y."/>
            <person name="Wright H."/>
        </authorList>
    </citation>
    <scope>NUCLEOTIDE SEQUENCE [LARGE SCALE GENOMIC DNA]</scope>
</reference>
<reference key="6">
    <citation type="submission" date="2005-07" db="EMBL/GenBank/DDBJ databases">
        <authorList>
            <person name="Mural R.J."/>
            <person name="Istrail S."/>
            <person name="Sutton G."/>
            <person name="Florea L."/>
            <person name="Halpern A.L."/>
            <person name="Mobarry C.M."/>
            <person name="Lippert R."/>
            <person name="Walenz B."/>
            <person name="Shatkay H."/>
            <person name="Dew I."/>
            <person name="Miller J.R."/>
            <person name="Flanigan M.J."/>
            <person name="Edwards N.J."/>
            <person name="Bolanos R."/>
            <person name="Fasulo D."/>
            <person name="Halldorsson B.V."/>
            <person name="Hannenhalli S."/>
            <person name="Turner R."/>
            <person name="Yooseph S."/>
            <person name="Lu F."/>
            <person name="Nusskern D.R."/>
            <person name="Shue B.C."/>
            <person name="Zheng X.H."/>
            <person name="Zhong F."/>
            <person name="Delcher A.L."/>
            <person name="Huson D.H."/>
            <person name="Kravitz S.A."/>
            <person name="Mouchard L."/>
            <person name="Reinert K."/>
            <person name="Remington K.A."/>
            <person name="Clark A.G."/>
            <person name="Waterman M.S."/>
            <person name="Eichler E.E."/>
            <person name="Adams M.D."/>
            <person name="Hunkapiller M.W."/>
            <person name="Myers E.W."/>
            <person name="Venter J.C."/>
        </authorList>
    </citation>
    <scope>NUCLEOTIDE SEQUENCE [LARGE SCALE GENOMIC DNA]</scope>
</reference>
<reference key="7">
    <citation type="journal article" date="2004" name="Genome Res.">
        <title>The status, quality, and expansion of the NIH full-length cDNA project: the Mammalian Gene Collection (MGC).</title>
        <authorList>
            <consortium name="The MGC Project Team"/>
        </authorList>
    </citation>
    <scope>NUCLEOTIDE SEQUENCE [LARGE SCALE MRNA] (ISOFORM 1)</scope>
    <source>
        <tissue>Brain</tissue>
        <tissue>Lung</tissue>
    </source>
</reference>
<reference key="8">
    <citation type="submission" date="2006-05" db="UniProtKB">
        <authorList>
            <person name="Bienvenut W.V."/>
            <person name="Kanor S."/>
            <person name="Tissot J.-D."/>
            <person name="Quadroni M."/>
        </authorList>
    </citation>
    <scope>PROTEIN SEQUENCE OF 2-19</scope>
    <scope>CLEAVAGE OF INITIATOR METHIONINE</scope>
    <scope>ACETYLATION AT ALA-2</scope>
    <scope>IDENTIFICATION BY MASS SPECTROMETRY</scope>
    <source>
        <tissue>T-cell</tissue>
    </source>
</reference>
<reference key="9">
    <citation type="journal article" date="2009" name="PLoS ONE">
        <title>Differential role of human choline kinase alpha and beta enzymes in lipid metabolism: implications in cancer onset and treatment.</title>
        <authorList>
            <person name="Gallego-Ortega D."/>
            <person name="Ramirez de Molina A."/>
            <person name="Ramos M.A."/>
            <person name="Valdes-Mora F."/>
            <person name="Barderas M.G."/>
            <person name="Sarmentero-Estrada J."/>
            <person name="Lacal J.C."/>
        </authorList>
    </citation>
    <scope>FUNCTION</scope>
    <scope>CATALYTIC ACTIVITY</scope>
    <scope>BIOPHYSICOCHEMICAL PROPERTIES</scope>
</reference>
<reference key="10">
    <citation type="journal article" date="2011" name="Am. J. Hum. Genet.">
        <title>A congenital muscular dystrophy with mitochondrial structural abnormalities caused by defective de novo phosphatidylcholine biosynthesis.</title>
        <authorList>
            <person name="Mitsuhashi S."/>
            <person name="Ohkuma A."/>
            <person name="Talim B."/>
            <person name="Karahashi M."/>
            <person name="Koumura T."/>
            <person name="Aoyama C."/>
            <person name="Kurihara M."/>
            <person name="Quinlivan R."/>
            <person name="Sewry C."/>
            <person name="Mitsuhashi H."/>
            <person name="Goto K."/>
            <person name="Koksal B."/>
            <person name="Kale G."/>
            <person name="Ikeda K."/>
            <person name="Taguchi R."/>
            <person name="Noguchi S."/>
            <person name="Hayashi Y.K."/>
            <person name="Nonaka I."/>
            <person name="Sher R.B."/>
            <person name="Sugimoto H."/>
            <person name="Nakagawa Y."/>
            <person name="Cox G.A."/>
            <person name="Topaloglu H."/>
            <person name="Nishino I."/>
        </authorList>
    </citation>
    <scope>FUNCTION</scope>
    <scope>CATALYTIC ACTIVITY</scope>
    <scope>INVOLVEMENT IN MDCMC</scope>
    <scope>VARIANTS MDCMC 39-SER--SER-395 DEL; 185-PRO--TRP-187 DEL; 270-TYR--SER-395 DEL; LYS-283; 308-GLN--SER-395 DEL AND LEU-377</scope>
    <scope>CHARACTERIZATION OF VARIANTS MDCMC 39-SER--SER-395 DEL; 185-PRO--TRP-187 DEL; 270-TYR--SER-395 DEL; LYS-283 AND LEU-377</scope>
    <scope>VARIANTS ILE-301 AND ARG-328</scope>
</reference>
<reference key="11">
    <citation type="journal article" date="2012" name="Mol. Cell. Proteomics">
        <title>Comparative large-scale characterisation of plant vs. mammal proteins reveals similar and idiosyncratic N-alpha acetylation features.</title>
        <authorList>
            <person name="Bienvenut W.V."/>
            <person name="Sumpton D."/>
            <person name="Martinez A."/>
            <person name="Lilla S."/>
            <person name="Espagne C."/>
            <person name="Meinnel T."/>
            <person name="Giglione C."/>
        </authorList>
    </citation>
    <scope>ACETYLATION [LARGE SCALE ANALYSIS] AT ALA-2</scope>
    <scope>CLEAVAGE OF INITIATOR METHIONINE [LARGE SCALE ANALYSIS]</scope>
    <scope>IDENTIFICATION BY MASS SPECTROMETRY [LARGE SCALE ANALYSIS]</scope>
</reference>
<reference key="12">
    <citation type="submission" date="2009-09" db="PDB data bank">
        <title>Crystal structure of human choline kinase beta in complex with phosphorylated hemicholinium-3 and adenosine nucleotide.</title>
        <authorList>
            <consortium name="Structural genomics consortium (SGC)"/>
        </authorList>
    </citation>
    <scope>X-RAY CRYSTALLOGRAPHY (1.3 ANGSTROMS) OF 14-395 IN COMPLEX WITH ADP; MAGNESIUM IONS AND HEMICHOLINIUM-3</scope>
</reference>
<reference evidence="14 15" key="13">
    <citation type="journal article" date="2010" name="J. Biol. Chem.">
        <title>Crystal structures of human choline kinase isoforms in complex with hemicholinium-3: single amino acid near the active site influences inhibitor sensitivity.</title>
        <authorList>
            <person name="Hong B.S."/>
            <person name="Allali-Hassani A."/>
            <person name="Tempel W."/>
            <person name="Finerty P.J. Jr."/>
            <person name="Mackenzie F."/>
            <person name="Dimov S."/>
            <person name="Vedadi M."/>
            <person name="Park H.W."/>
        </authorList>
    </citation>
    <scope>X-RAY CRYSTALLOGRAPHY (1.30 ANGSTROMS) OF 35-395 IN COMPLEX WITH ADP</scope>
</reference>
<reference key="14">
    <citation type="journal article" date="2012" name="Arch. Neurol.">
        <title>Congenital megaconial myopathy due to a novel defect in the choline kinase beta gene.</title>
        <authorList>
            <person name="Gutierrez Rios P."/>
            <person name="Kalra A.A."/>
            <person name="Wilson J.D."/>
            <person name="Tanji K."/>
            <person name="Akman H.O."/>
            <person name="Area Gomez E."/>
            <person name="Schon E.A."/>
            <person name="DiMauro S."/>
        </authorList>
    </citation>
    <scope>VARIANT MDCMC 292-GLU--SER-395 DEL</scope>
</reference>
<reference key="15">
    <citation type="journal article" date="2014" name="Eur. J. Paediatr. Neurol.">
        <title>Exome sequencing identifies a CHKB mutation in Spanish patient with megaconial congenital muscular dystrophy and mtDNA depletion.</title>
        <authorList>
            <person name="Castro-Gago M."/>
            <person name="Dacruz-Alvarez D."/>
            <person name="Pintos-Martinez E."/>
            <person name="Beiras-Iglesias A."/>
            <person name="Delmiro A."/>
            <person name="Arenas J."/>
            <person name="Martin M.A."/>
            <person name="Martinez-Azorin F."/>
        </authorList>
    </citation>
    <scope>VARIANT MDCMC 270-TYR--SER-395 DEL</scope>
</reference>
<reference key="16">
    <citation type="journal article" date="2015" name="J. Inherit. Metab. Dis.">
        <title>Clinical characteristics of megaconial congenital muscular dystrophy due to choline kinase beta gene defects in a series of 15 patients.</title>
        <authorList>
            <person name="Haliloglu G."/>
            <person name="Talim B."/>
            <person name="Sel C.G."/>
            <person name="Topaloglu H."/>
        </authorList>
    </citation>
    <scope>VARIANTS MDCMC 159-ARG--SER-395 DEL AND 308-GLN--SER-395 DEL</scope>
</reference>
<reference key="17">
    <citation type="journal article" date="2015" name="Muscle Nerve">
        <title>Novel CHKB mutation expands the megaconial muscular dystrophy phenotype.</title>
        <authorList>
            <person name="Cabrera-Serrano M."/>
            <person name="Junckerstorff R.C."/>
            <person name="Atkinson V."/>
            <person name="Sivadorai P."/>
            <person name="Allcock R.J."/>
            <person name="Lamont P."/>
            <person name="Laing N.G."/>
        </authorList>
    </citation>
    <scope>VARIANT MDCMC 216-TYR--SER-395 DEL</scope>
</reference>
<reference key="18">
    <citation type="journal article" date="2016" name="Brain Dev.">
        <title>Congenital neurogenic muscular atrophy in megaconial myopathy due to a mutation in CHKB gene.</title>
        <authorList>
            <person name="Castro-Gago M."/>
            <person name="Dacruz-Alvarez D."/>
            <person name="Pintos-Martinez E."/>
            <person name="Beiras-Iglesias A."/>
            <person name="Arenas J."/>
            <person name="Martin M.A."/>
            <person name="Martinez-Azorin F."/>
        </authorList>
    </citation>
    <scope>VARIANT MDCMC 270-TYR--SER-395 DEL</scope>
</reference>
<reference key="19">
    <citation type="journal article" date="2016" name="Brain Dev.">
        <authorList>
            <person name="Castro-Gago M."/>
            <person name="Dacruz-Alvarez D."/>
            <person name="Pintos-Martinez E."/>
            <person name="Beiras-Iglesias A."/>
            <person name="Arenas J."/>
            <person name="Martin M.A."/>
            <person name="Martinez-Azorin F."/>
        </authorList>
    </citation>
    <scope>ERRATUM OF PUBMED:26006750</scope>
</reference>
<evidence type="ECO:0000250" key="1">
    <source>
        <dbReference type="UniProtKB" id="P35790"/>
    </source>
</evidence>
<evidence type="ECO:0000269" key="2">
    <source>
    </source>
</evidence>
<evidence type="ECO:0000269" key="3">
    <source>
    </source>
</evidence>
<evidence type="ECO:0000269" key="4">
    <source>
    </source>
</evidence>
<evidence type="ECO:0000269" key="5">
    <source>
    </source>
</evidence>
<evidence type="ECO:0000269" key="6">
    <source>
    </source>
</evidence>
<evidence type="ECO:0000269" key="7">
    <source>
    </source>
</evidence>
<evidence type="ECO:0000269" key="8">
    <source>
    </source>
</evidence>
<evidence type="ECO:0000269" key="9">
    <source>
    </source>
</evidence>
<evidence type="ECO:0000269" key="10">
    <source ref="12"/>
</evidence>
<evidence type="ECO:0000269" key="11">
    <source ref="8"/>
</evidence>
<evidence type="ECO:0000305" key="12"/>
<evidence type="ECO:0000305" key="13">
    <source>
    </source>
</evidence>
<evidence type="ECO:0007744" key="14">
    <source>
        <dbReference type="PDB" id="3FEG"/>
    </source>
</evidence>
<evidence type="ECO:0007744" key="15">
    <source>
        <dbReference type="PDB" id="3LQ3"/>
    </source>
</evidence>
<evidence type="ECO:0007744" key="16">
    <source>
    </source>
</evidence>
<evidence type="ECO:0007829" key="17">
    <source>
        <dbReference type="PDB" id="2IG7"/>
    </source>
</evidence>
<evidence type="ECO:0007829" key="18">
    <source>
        <dbReference type="PDB" id="3FEG"/>
    </source>
</evidence>
<keyword id="KW-0002">3D-structure</keyword>
<keyword id="KW-0007">Acetylation</keyword>
<keyword id="KW-0025">Alternative splicing</keyword>
<keyword id="KW-0067">ATP-binding</keyword>
<keyword id="KW-0912">Congenital muscular dystrophy</keyword>
<keyword id="KW-0903">Direct protein sequencing</keyword>
<keyword id="KW-0225">Disease variant</keyword>
<keyword id="KW-0418">Kinase</keyword>
<keyword id="KW-0444">Lipid biosynthesis</keyword>
<keyword id="KW-0443">Lipid metabolism</keyword>
<keyword id="KW-0547">Nucleotide-binding</keyword>
<keyword id="KW-0594">Phospholipid biosynthesis</keyword>
<keyword id="KW-1208">Phospholipid metabolism</keyword>
<keyword id="KW-1267">Proteomics identification</keyword>
<keyword id="KW-1185">Reference proteome</keyword>
<keyword id="KW-0808">Transferase</keyword>
<feature type="initiator methionine" description="Removed" evidence="11 16">
    <location>
        <position position="1"/>
    </location>
</feature>
<feature type="chain" id="PRO_0000206222" description="Choline/ethanolamine kinase">
    <location>
        <begin position="2"/>
        <end position="395"/>
    </location>
</feature>
<feature type="binding site" evidence="1">
    <location>
        <begin position="75"/>
        <end position="81"/>
    </location>
    <ligand>
        <name>ATP</name>
        <dbReference type="ChEBI" id="CHEBI:30616"/>
    </ligand>
</feature>
<feature type="binding site" evidence="1">
    <location>
        <begin position="77"/>
        <end position="79"/>
    </location>
    <ligand>
        <name>phosphocholine</name>
        <dbReference type="ChEBI" id="CHEBI:295975"/>
    </ligand>
</feature>
<feature type="binding site" evidence="3 10 14">
    <location>
        <position position="104"/>
    </location>
    <ligand>
        <name>ATP</name>
        <dbReference type="ChEBI" id="CHEBI:30616"/>
    </ligand>
</feature>
<feature type="binding site" evidence="3 10 14">
    <location>
        <begin position="146"/>
        <end position="152"/>
    </location>
    <ligand>
        <name>ATP</name>
        <dbReference type="ChEBI" id="CHEBI:30616"/>
    </ligand>
</feature>
<feature type="binding site" evidence="1">
    <location>
        <position position="244"/>
    </location>
    <ligand>
        <name>ATP</name>
        <dbReference type="ChEBI" id="CHEBI:30616"/>
    </ligand>
</feature>
<feature type="binding site" evidence="3 10 14">
    <location>
        <position position="264"/>
    </location>
    <ligand>
        <name>ATP</name>
        <dbReference type="ChEBI" id="CHEBI:30616"/>
    </ligand>
</feature>
<feature type="modified residue" description="N-acetylalanine" evidence="11 16">
    <location>
        <position position="2"/>
    </location>
</feature>
<feature type="splice variant" id="VSP_034248" description="In isoform 2." evidence="12">
    <original>SGGLSNLLFRCSLPDHLPSVGEEPREVLLRLYGAILQGVDSLVLESVMFAILA</original>
    <variation>RWEVRGQPLRCADRGQGSAAGPSGCSMFSPPSCARAWGGAGPAWPGGGRGRGR</variation>
    <location>
        <begin position="75"/>
        <end position="127"/>
    </location>
</feature>
<feature type="splice variant" id="VSP_034249" description="In isoform 2." evidence="12">
    <location>
        <begin position="128"/>
        <end position="395"/>
    </location>
</feature>
<feature type="sequence variant" id="VAR_081791" description="In MDCMC; loss of choline kinase activity; decreased amount of phosphatidylcholine in patients cells." evidence="4">
    <location>
        <begin position="39"/>
        <end position="395"/>
    </location>
</feature>
<feature type="sequence variant" id="VAR_081792" description="In MDCMC." evidence="9">
    <location>
        <begin position="159"/>
        <end position="395"/>
    </location>
</feature>
<feature type="sequence variant" id="VAR_081793" description="In MDCMC; severely decreased choline kinase activity." evidence="4">
    <location>
        <begin position="185"/>
        <end position="187"/>
    </location>
</feature>
<feature type="sequence variant" id="VAR_081794" description="In MDCMC." evidence="7">
    <location>
        <begin position="216"/>
        <end position="395"/>
    </location>
</feature>
<feature type="sequence variant" id="VAR_081795" description="In MDCMC; loss of choline kinase activity; decreased amount of phosphatidylcholine in patients cells." evidence="4 6 8">
    <location>
        <begin position="270"/>
        <end position="395"/>
    </location>
</feature>
<feature type="sequence variant" id="VAR_081796" description="In MDCMC; severely decreased choline kinase activity." evidence="4">
    <original>E</original>
    <variation>K</variation>
    <location>
        <position position="283"/>
    </location>
</feature>
<feature type="sequence variant" id="VAR_081797" description="In MDCMC." evidence="5">
    <location>
        <begin position="292"/>
        <end position="395"/>
    </location>
</feature>
<feature type="sequence variant" id="VAR_081798" description="In dbSNP:rs147485527." evidence="4">
    <original>T</original>
    <variation>I</variation>
    <location>
        <position position="301"/>
    </location>
</feature>
<feature type="sequence variant" id="VAR_081799" description="In MDCMC." evidence="4 9">
    <location>
        <begin position="308"/>
        <end position="395"/>
    </location>
</feature>
<feature type="sequence variant" id="VAR_081800" description="In dbSNP:rs141381896." evidence="4">
    <original>Q</original>
    <variation>R</variation>
    <location>
        <position position="328"/>
    </location>
</feature>
<feature type="sequence variant" id="VAR_081801" description="In MDCMC; decreased choline kinase activity; dbSNP:rs772705206." evidence="4">
    <original>R</original>
    <variation>L</variation>
    <location>
        <position position="377"/>
    </location>
</feature>
<feature type="helix" evidence="18">
    <location>
        <begin position="43"/>
        <end position="57"/>
    </location>
</feature>
<feature type="helix" evidence="18">
    <location>
        <begin position="59"/>
        <end position="63"/>
    </location>
</feature>
<feature type="helix" evidence="18">
    <location>
        <begin position="66"/>
        <end position="68"/>
    </location>
</feature>
<feature type="strand" evidence="17">
    <location>
        <begin position="70"/>
        <end position="74"/>
    </location>
</feature>
<feature type="turn" evidence="17">
    <location>
        <begin position="77"/>
        <end position="79"/>
    </location>
</feature>
<feature type="strand" evidence="18">
    <location>
        <begin position="82"/>
        <end position="86"/>
    </location>
</feature>
<feature type="strand" evidence="17">
    <location>
        <begin position="94"/>
        <end position="96"/>
    </location>
</feature>
<feature type="strand" evidence="18">
    <location>
        <begin position="99"/>
        <end position="105"/>
    </location>
</feature>
<feature type="helix" evidence="17">
    <location>
        <begin position="108"/>
        <end position="110"/>
    </location>
</feature>
<feature type="helix" evidence="18">
    <location>
        <begin position="113"/>
        <end position="128"/>
    </location>
</feature>
<feature type="strand" evidence="18">
    <location>
        <begin position="135"/>
        <end position="139"/>
    </location>
</feature>
<feature type="strand" evidence="18">
    <location>
        <begin position="142"/>
        <end position="146"/>
    </location>
</feature>
<feature type="strand" evidence="18">
    <location>
        <begin position="149"/>
        <end position="152"/>
    </location>
</feature>
<feature type="helix" evidence="18">
    <location>
        <begin position="155"/>
        <end position="159"/>
    </location>
</feature>
<feature type="helix" evidence="18">
    <location>
        <begin position="161"/>
        <end position="175"/>
    </location>
</feature>
<feature type="helix" evidence="18">
    <location>
        <begin position="187"/>
        <end position="201"/>
    </location>
</feature>
<feature type="helix" evidence="18">
    <location>
        <begin position="212"/>
        <end position="215"/>
    </location>
</feature>
<feature type="helix" evidence="18">
    <location>
        <begin position="218"/>
        <end position="230"/>
    </location>
</feature>
<feature type="strand" evidence="18">
    <location>
        <begin position="236"/>
        <end position="239"/>
    </location>
</feature>
<feature type="helix" evidence="18">
    <location>
        <begin position="245"/>
        <end position="247"/>
    </location>
</feature>
<feature type="strand" evidence="18">
    <location>
        <begin position="248"/>
        <end position="252"/>
    </location>
</feature>
<feature type="strand" evidence="17">
    <location>
        <begin position="255"/>
        <end position="257"/>
    </location>
</feature>
<feature type="strand" evidence="18">
    <location>
        <begin position="260"/>
        <end position="262"/>
    </location>
</feature>
<feature type="helix" evidence="17">
    <location>
        <begin position="265"/>
        <end position="267"/>
    </location>
</feature>
<feature type="strand" evidence="18">
    <location>
        <begin position="269"/>
        <end position="272"/>
    </location>
</feature>
<feature type="helix" evidence="18">
    <location>
        <begin position="273"/>
        <end position="283"/>
    </location>
</feature>
<feature type="helix" evidence="18">
    <location>
        <begin position="300"/>
        <end position="302"/>
    </location>
</feature>
<feature type="helix" evidence="18">
    <location>
        <begin position="306"/>
        <end position="320"/>
    </location>
</feature>
<feature type="turn" evidence="18">
    <location>
        <begin position="321"/>
        <end position="323"/>
    </location>
</feature>
<feature type="helix" evidence="18">
    <location>
        <begin position="328"/>
        <end position="361"/>
    </location>
</feature>
<feature type="strand" evidence="18">
    <location>
        <begin position="365"/>
        <end position="368"/>
    </location>
</feature>
<feature type="helix" evidence="18">
    <location>
        <begin position="370"/>
        <end position="386"/>
    </location>
</feature>
<protein>
    <recommendedName>
        <fullName>Choline/ethanolamine kinase</fullName>
    </recommendedName>
    <alternativeName>
        <fullName>Choline kinase beta</fullName>
        <shortName>CK</shortName>
        <shortName>CKB</shortName>
        <ecNumber evidence="2 4">2.7.1.32</ecNumber>
    </alternativeName>
    <alternativeName>
        <fullName>Choline kinase-like protein</fullName>
    </alternativeName>
    <alternativeName>
        <fullName>Ethanolamine kinase</fullName>
        <shortName>EK</shortName>
        <ecNumber evidence="2">2.7.1.82</ecNumber>
    </alternativeName>
    <alternativeName>
        <fullName>Ethanolamine kinase beta</fullName>
        <shortName>EKB</shortName>
    </alternativeName>
    <alternativeName>
        <fullName>choline/ethanolamine kinase beta</fullName>
        <shortName>CKEKB</shortName>
    </alternativeName>
</protein>
<name>CHKB_HUMAN</name>
<proteinExistence type="evidence at protein level"/>
<gene>
    <name type="primary">CHKB</name>
    <name type="synonym">CHETK</name>
    <name type="synonym">CHKL</name>
</gene>
<dbReference type="EC" id="2.7.1.32" evidence="2 4"/>
<dbReference type="EC" id="2.7.1.82" evidence="2"/>
<dbReference type="EMBL" id="AB029885">
    <property type="protein sequence ID" value="BAA82511.1"/>
    <property type="molecule type" value="Genomic_DNA"/>
</dbReference>
<dbReference type="EMBL" id="AB029886">
    <property type="protein sequence ID" value="BAA82512.1"/>
    <property type="molecule type" value="mRNA"/>
</dbReference>
<dbReference type="EMBL" id="AL096780">
    <property type="protein sequence ID" value="CAB46629.1"/>
    <property type="molecule type" value="mRNA"/>
</dbReference>
<dbReference type="EMBL" id="AL096781">
    <property type="protein sequence ID" value="CAB46630.1"/>
    <property type="molecule type" value="mRNA"/>
</dbReference>
<dbReference type="EMBL" id="CR456419">
    <property type="protein sequence ID" value="CAG30305.1"/>
    <property type="molecule type" value="mRNA"/>
</dbReference>
<dbReference type="EMBL" id="AK314324">
    <property type="protein sequence ID" value="BAG36972.1"/>
    <property type="molecule type" value="mRNA"/>
</dbReference>
<dbReference type="EMBL" id="U62317">
    <property type="protein sequence ID" value="AAB03342.2"/>
    <property type="status" value="ALT_SEQ"/>
    <property type="molecule type" value="Genomic_DNA"/>
</dbReference>
<dbReference type="EMBL" id="CH471138">
    <property type="protein sequence ID" value="EAW73573.1"/>
    <property type="molecule type" value="Genomic_DNA"/>
</dbReference>
<dbReference type="EMBL" id="BC082263">
    <property type="protein sequence ID" value="AAH82263.1"/>
    <property type="molecule type" value="mRNA"/>
</dbReference>
<dbReference type="EMBL" id="BC101488">
    <property type="protein sequence ID" value="AAI01489.1"/>
    <property type="molecule type" value="mRNA"/>
</dbReference>
<dbReference type="EMBL" id="BC113521">
    <property type="protein sequence ID" value="AAI13522.2"/>
    <property type="molecule type" value="mRNA"/>
</dbReference>
<dbReference type="CCDS" id="CCDS14099.1">
    <molecule id="Q9Y259-1"/>
</dbReference>
<dbReference type="RefSeq" id="NP_005189.2">
    <molecule id="Q9Y259-1"/>
    <property type="nucleotide sequence ID" value="NM_005198.4"/>
</dbReference>
<dbReference type="PDB" id="2IG7">
    <property type="method" value="X-ray"/>
    <property type="resolution" value="1.80 A"/>
    <property type="chains" value="A/B=14-395"/>
</dbReference>
<dbReference type="PDB" id="3FEG">
    <property type="method" value="X-ray"/>
    <property type="resolution" value="1.30 A"/>
    <property type="chains" value="A=35-395"/>
</dbReference>
<dbReference type="PDB" id="3LQ3">
    <property type="method" value="X-ray"/>
    <property type="resolution" value="1.42 A"/>
    <property type="chains" value="A=14-395"/>
</dbReference>
<dbReference type="PDBsum" id="2IG7"/>
<dbReference type="PDBsum" id="3FEG"/>
<dbReference type="PDBsum" id="3LQ3"/>
<dbReference type="SMR" id="Q9Y259"/>
<dbReference type="BioGRID" id="107544">
    <property type="interactions" value="3"/>
</dbReference>
<dbReference type="FunCoup" id="Q9Y259">
    <property type="interactions" value="860"/>
</dbReference>
<dbReference type="IntAct" id="Q9Y259">
    <property type="interactions" value="2"/>
</dbReference>
<dbReference type="STRING" id="9606.ENSP00000384400"/>
<dbReference type="BindingDB" id="Q9Y259"/>
<dbReference type="ChEMBL" id="CHEMBL3112385"/>
<dbReference type="DrugBank" id="DB00122">
    <property type="generic name" value="Choline"/>
</dbReference>
<dbReference type="DrugBank" id="DB14006">
    <property type="generic name" value="Choline salicylate"/>
</dbReference>
<dbReference type="SwissLipids" id="SLP:000001747">
    <molecule id="Q9Y259-1"/>
</dbReference>
<dbReference type="GlyGen" id="Q9Y259">
    <property type="glycosylation" value="1 site, 1 O-linked glycan (1 site)"/>
</dbReference>
<dbReference type="iPTMnet" id="Q9Y259"/>
<dbReference type="PhosphoSitePlus" id="Q9Y259"/>
<dbReference type="BioMuta" id="CHKB"/>
<dbReference type="DMDM" id="6685604"/>
<dbReference type="jPOST" id="Q9Y259"/>
<dbReference type="MassIVE" id="Q9Y259"/>
<dbReference type="PaxDb" id="9606-ENSP00000384400"/>
<dbReference type="PeptideAtlas" id="Q9Y259"/>
<dbReference type="ProteomicsDB" id="85662">
    <molecule id="Q9Y259-1"/>
</dbReference>
<dbReference type="ProteomicsDB" id="85663">
    <molecule id="Q9Y259-2"/>
</dbReference>
<dbReference type="Pumba" id="Q9Y259"/>
<dbReference type="Antibodypedia" id="14556">
    <property type="antibodies" value="159 antibodies from 28 providers"/>
</dbReference>
<dbReference type="DNASU" id="1120"/>
<dbReference type="Ensembl" id="ENST00000406938.3">
    <molecule id="Q9Y259-1"/>
    <property type="protein sequence ID" value="ENSP00000384400.3"/>
    <property type="gene ID" value="ENSG00000100288.20"/>
</dbReference>
<dbReference type="GeneID" id="1120"/>
<dbReference type="KEGG" id="hsa:1120"/>
<dbReference type="MANE-Select" id="ENST00000406938.3">
    <property type="protein sequence ID" value="ENSP00000384400.3"/>
    <property type="RefSeq nucleotide sequence ID" value="NM_005198.5"/>
    <property type="RefSeq protein sequence ID" value="NP_005189.2"/>
</dbReference>
<dbReference type="UCSC" id="uc003bmv.4">
    <molecule id="Q9Y259-1"/>
    <property type="organism name" value="human"/>
</dbReference>
<dbReference type="AGR" id="HGNC:1938"/>
<dbReference type="CTD" id="1120"/>
<dbReference type="DisGeNET" id="1120"/>
<dbReference type="GeneCards" id="CHKB"/>
<dbReference type="GeneReviews" id="CHKB"/>
<dbReference type="HGNC" id="HGNC:1938">
    <property type="gene designation" value="CHKB"/>
</dbReference>
<dbReference type="HPA" id="ENSG00000100288">
    <property type="expression patterns" value="Low tissue specificity"/>
</dbReference>
<dbReference type="MalaCards" id="CHKB"/>
<dbReference type="MIM" id="602541">
    <property type="type" value="phenotype"/>
</dbReference>
<dbReference type="MIM" id="612395">
    <property type="type" value="gene"/>
</dbReference>
<dbReference type="neXtProt" id="NX_Q9Y259"/>
<dbReference type="OpenTargets" id="ENSG00000100288"/>
<dbReference type="Orphanet" id="280671">
    <property type="disease" value="Megaconial congenital muscular dystrophy"/>
</dbReference>
<dbReference type="Orphanet" id="521305">
    <property type="disease" value="Proximal myopathy with focal depletion of mitochondria"/>
</dbReference>
<dbReference type="PharmGKB" id="PA26469"/>
<dbReference type="VEuPathDB" id="HostDB:ENSG00000100288"/>
<dbReference type="eggNOG" id="KOG2686">
    <property type="taxonomic scope" value="Eukaryota"/>
</dbReference>
<dbReference type="GeneTree" id="ENSGT00950000182939"/>
<dbReference type="HOGENOM" id="CLU_012712_2_1_1"/>
<dbReference type="InParanoid" id="Q9Y259"/>
<dbReference type="OMA" id="IETSIDY"/>
<dbReference type="OrthoDB" id="3649325at2759"/>
<dbReference type="PAN-GO" id="Q9Y259">
    <property type="GO annotations" value="5 GO annotations based on evolutionary models"/>
</dbReference>
<dbReference type="PhylomeDB" id="Q9Y259"/>
<dbReference type="TreeFam" id="TF313549"/>
<dbReference type="BRENDA" id="2.7.1.32">
    <property type="organism ID" value="2681"/>
</dbReference>
<dbReference type="PathwayCommons" id="Q9Y259"/>
<dbReference type="Reactome" id="R-HSA-1483191">
    <property type="pathway name" value="Synthesis of PC"/>
</dbReference>
<dbReference type="Reactome" id="R-HSA-1483213">
    <property type="pathway name" value="Synthesis of PE"/>
</dbReference>
<dbReference type="SABIO-RK" id="Q9Y259"/>
<dbReference type="SignaLink" id="Q9Y259"/>
<dbReference type="SIGNOR" id="Q9Y259"/>
<dbReference type="UniPathway" id="UPA00558">
    <property type="reaction ID" value="UER00741"/>
</dbReference>
<dbReference type="BioGRID-ORCS" id="1120">
    <property type="hits" value="13 hits in 1153 CRISPR screens"/>
</dbReference>
<dbReference type="EvolutionaryTrace" id="Q9Y259"/>
<dbReference type="GeneWiki" id="CHKB_(gene)"/>
<dbReference type="GenomeRNAi" id="1120"/>
<dbReference type="Pharos" id="Q9Y259">
    <property type="development level" value="Tbio"/>
</dbReference>
<dbReference type="PRO" id="PR:Q9Y259"/>
<dbReference type="Proteomes" id="UP000005640">
    <property type="component" value="Chromosome 22"/>
</dbReference>
<dbReference type="RNAct" id="Q9Y259">
    <property type="molecule type" value="protein"/>
</dbReference>
<dbReference type="Bgee" id="ENSG00000100288">
    <property type="expression patterns" value="Expressed in pituitary gland and 95 other cell types or tissues"/>
</dbReference>
<dbReference type="ExpressionAtlas" id="Q9Y259">
    <property type="expression patterns" value="baseline and differential"/>
</dbReference>
<dbReference type="GO" id="GO:0005737">
    <property type="term" value="C:cytoplasm"/>
    <property type="evidence" value="ECO:0000318"/>
    <property type="project" value="GO_Central"/>
</dbReference>
<dbReference type="GO" id="GO:0005829">
    <property type="term" value="C:cytosol"/>
    <property type="evidence" value="ECO:0000304"/>
    <property type="project" value="Reactome"/>
</dbReference>
<dbReference type="GO" id="GO:0005524">
    <property type="term" value="F:ATP binding"/>
    <property type="evidence" value="ECO:0007669"/>
    <property type="project" value="UniProtKB-KW"/>
</dbReference>
<dbReference type="GO" id="GO:0004103">
    <property type="term" value="F:choline kinase activity"/>
    <property type="evidence" value="ECO:0000314"/>
    <property type="project" value="UniProtKB"/>
</dbReference>
<dbReference type="GO" id="GO:0004305">
    <property type="term" value="F:ethanolamine kinase activity"/>
    <property type="evidence" value="ECO:0000314"/>
    <property type="project" value="UniProtKB"/>
</dbReference>
<dbReference type="GO" id="GO:0006657">
    <property type="term" value="P:CDP-choline pathway"/>
    <property type="evidence" value="ECO:0000318"/>
    <property type="project" value="GO_Central"/>
</dbReference>
<dbReference type="GO" id="GO:0007517">
    <property type="term" value="P:muscle organ development"/>
    <property type="evidence" value="ECO:0007669"/>
    <property type="project" value="Ensembl"/>
</dbReference>
<dbReference type="GO" id="GO:0006646">
    <property type="term" value="P:phosphatidylethanolamine biosynthetic process"/>
    <property type="evidence" value="ECO:0000314"/>
    <property type="project" value="UniProtKB"/>
</dbReference>
<dbReference type="CDD" id="cd05156">
    <property type="entry name" value="ChoK_euk"/>
    <property type="match status" value="1"/>
</dbReference>
<dbReference type="FunFam" id="3.90.1200.10:FF:000005">
    <property type="entry name" value="Choline kinase alpha"/>
    <property type="match status" value="1"/>
</dbReference>
<dbReference type="Gene3D" id="3.90.1200.10">
    <property type="match status" value="1"/>
</dbReference>
<dbReference type="Gene3D" id="3.30.200.20">
    <property type="entry name" value="Phosphorylase Kinase, domain 1"/>
    <property type="match status" value="1"/>
</dbReference>
<dbReference type="InterPro" id="IPR011009">
    <property type="entry name" value="Kinase-like_dom_sf"/>
</dbReference>
<dbReference type="PANTHER" id="PTHR22603">
    <property type="entry name" value="CHOLINE/ETHANOALAMINE KINASE"/>
    <property type="match status" value="1"/>
</dbReference>
<dbReference type="PANTHER" id="PTHR22603:SF35">
    <property type="entry name" value="CHOLINE_ETHANOLAMINE KINASE"/>
    <property type="match status" value="1"/>
</dbReference>
<dbReference type="Pfam" id="PF01633">
    <property type="entry name" value="Choline_kinase"/>
    <property type="match status" value="1"/>
</dbReference>
<dbReference type="SUPFAM" id="SSF56112">
    <property type="entry name" value="Protein kinase-like (PK-like)"/>
    <property type="match status" value="1"/>
</dbReference>